<keyword id="KW-0028">Amino-acid biosynthesis</keyword>
<keyword id="KW-0032">Aminotransferase</keyword>
<keyword id="KW-0055">Arginine biosynthesis</keyword>
<keyword id="KW-0056">Arginine metabolism</keyword>
<keyword id="KW-0963">Cytoplasm</keyword>
<keyword id="KW-0663">Pyridoxal phosphate</keyword>
<keyword id="KW-1185">Reference proteome</keyword>
<keyword id="KW-0808">Transferase</keyword>
<evidence type="ECO:0000250" key="1"/>
<evidence type="ECO:0000269" key="2">
    <source>
    </source>
</evidence>
<evidence type="ECO:0000305" key="3"/>
<dbReference type="EC" id="2.6.1.11"/>
<dbReference type="EC" id="2.6.1.81"/>
<dbReference type="EMBL" id="AF011922">
    <property type="protein sequence ID" value="AAC46009.1"/>
    <property type="molecule type" value="Genomic_DNA"/>
</dbReference>
<dbReference type="EMBL" id="AF008308">
    <property type="protein sequence ID" value="AAC45654.1"/>
    <property type="molecule type" value="Genomic_DNA"/>
</dbReference>
<dbReference type="EMBL" id="AE004091">
    <property type="protein sequence ID" value="AAG04284.1"/>
    <property type="molecule type" value="Genomic_DNA"/>
</dbReference>
<dbReference type="PIR" id="H83532">
    <property type="entry name" value="H83532"/>
</dbReference>
<dbReference type="RefSeq" id="NP_249586.1">
    <property type="nucleotide sequence ID" value="NC_002516.2"/>
</dbReference>
<dbReference type="RefSeq" id="WP_003112608.1">
    <property type="nucleotide sequence ID" value="NZ_QZGE01000007.1"/>
</dbReference>
<dbReference type="SMR" id="O30508"/>
<dbReference type="FunCoup" id="O30508">
    <property type="interactions" value="658"/>
</dbReference>
<dbReference type="STRING" id="208964.PA0895"/>
<dbReference type="PaxDb" id="208964-PA0895"/>
<dbReference type="GeneID" id="878207"/>
<dbReference type="KEGG" id="pae:PA0895"/>
<dbReference type="PATRIC" id="fig|208964.12.peg.930"/>
<dbReference type="PseudoCAP" id="PA0895"/>
<dbReference type="HOGENOM" id="CLU_016922_10_1_6"/>
<dbReference type="InParanoid" id="O30508"/>
<dbReference type="OrthoDB" id="9801052at2"/>
<dbReference type="PhylomeDB" id="O30508"/>
<dbReference type="BioCyc" id="MetaCyc:MONOMER-11526"/>
<dbReference type="BioCyc" id="PAER208964:G1FZ6-911-MONOMER"/>
<dbReference type="BRENDA" id="2.6.1.81">
    <property type="organism ID" value="5087"/>
</dbReference>
<dbReference type="UniPathway" id="UPA00068">
    <property type="reaction ID" value="UER00109"/>
</dbReference>
<dbReference type="UniPathway" id="UPA00185">
    <property type="reaction ID" value="UER00281"/>
</dbReference>
<dbReference type="Proteomes" id="UP000002438">
    <property type="component" value="Chromosome"/>
</dbReference>
<dbReference type="GO" id="GO:0005737">
    <property type="term" value="C:cytoplasm"/>
    <property type="evidence" value="ECO:0007669"/>
    <property type="project" value="UniProtKB-SubCell"/>
</dbReference>
<dbReference type="GO" id="GO:0042802">
    <property type="term" value="F:identical protein binding"/>
    <property type="evidence" value="ECO:0000318"/>
    <property type="project" value="GO_Central"/>
</dbReference>
<dbReference type="GO" id="GO:0003992">
    <property type="term" value="F:N2-acetyl-L-ornithine:2-oxoglutarate 5-aminotransferase activity"/>
    <property type="evidence" value="ECO:0000314"/>
    <property type="project" value="PseudoCAP"/>
</dbReference>
<dbReference type="GO" id="GO:0030170">
    <property type="term" value="F:pyridoxal phosphate binding"/>
    <property type="evidence" value="ECO:0000318"/>
    <property type="project" value="GO_Central"/>
</dbReference>
<dbReference type="GO" id="GO:0043825">
    <property type="term" value="F:succinylornithine transaminase activity"/>
    <property type="evidence" value="ECO:0007669"/>
    <property type="project" value="UniProtKB-EC"/>
</dbReference>
<dbReference type="GO" id="GO:0006527">
    <property type="term" value="P:arginine catabolic process"/>
    <property type="evidence" value="ECO:0000314"/>
    <property type="project" value="PseudoCAP"/>
</dbReference>
<dbReference type="GO" id="GO:0019545">
    <property type="term" value="P:arginine catabolic process to succinate"/>
    <property type="evidence" value="ECO:0007669"/>
    <property type="project" value="UniProtKB-UniPathway"/>
</dbReference>
<dbReference type="GO" id="GO:0006526">
    <property type="term" value="P:L-arginine biosynthetic process"/>
    <property type="evidence" value="ECO:0000314"/>
    <property type="project" value="PseudoCAP"/>
</dbReference>
<dbReference type="CDD" id="cd00610">
    <property type="entry name" value="OAT_like"/>
    <property type="match status" value="1"/>
</dbReference>
<dbReference type="FunFam" id="3.40.640.10:FF:000004">
    <property type="entry name" value="Acetylornithine aminotransferase"/>
    <property type="match status" value="1"/>
</dbReference>
<dbReference type="Gene3D" id="3.90.1150.10">
    <property type="entry name" value="Aspartate Aminotransferase, domain 1"/>
    <property type="match status" value="1"/>
</dbReference>
<dbReference type="Gene3D" id="3.40.640.10">
    <property type="entry name" value="Type I PLP-dependent aspartate aminotransferase-like (Major domain)"/>
    <property type="match status" value="1"/>
</dbReference>
<dbReference type="HAMAP" id="MF_01107">
    <property type="entry name" value="ArgD_aminotrans_3"/>
    <property type="match status" value="1"/>
</dbReference>
<dbReference type="InterPro" id="IPR017652">
    <property type="entry name" value="Ac/SucOrn_transaminase_bac"/>
</dbReference>
<dbReference type="InterPro" id="IPR004636">
    <property type="entry name" value="AcOrn/SuccOrn_fam"/>
</dbReference>
<dbReference type="InterPro" id="IPR005814">
    <property type="entry name" value="Aminotrans_3"/>
</dbReference>
<dbReference type="InterPro" id="IPR049704">
    <property type="entry name" value="Aminotrans_3_PPA_site"/>
</dbReference>
<dbReference type="InterPro" id="IPR050103">
    <property type="entry name" value="Class-III_PLP-dep_AT"/>
</dbReference>
<dbReference type="InterPro" id="IPR015424">
    <property type="entry name" value="PyrdxlP-dep_Trfase"/>
</dbReference>
<dbReference type="InterPro" id="IPR015421">
    <property type="entry name" value="PyrdxlP-dep_Trfase_major"/>
</dbReference>
<dbReference type="InterPro" id="IPR015422">
    <property type="entry name" value="PyrdxlP-dep_Trfase_small"/>
</dbReference>
<dbReference type="NCBIfam" id="TIGR03246">
    <property type="entry name" value="arg_catab_astC"/>
    <property type="match status" value="1"/>
</dbReference>
<dbReference type="NCBIfam" id="TIGR00707">
    <property type="entry name" value="argD"/>
    <property type="match status" value="1"/>
</dbReference>
<dbReference type="NCBIfam" id="NF002325">
    <property type="entry name" value="PRK01278.1"/>
    <property type="match status" value="1"/>
</dbReference>
<dbReference type="NCBIfam" id="NF003468">
    <property type="entry name" value="PRK05093.1"/>
    <property type="match status" value="1"/>
</dbReference>
<dbReference type="NCBIfam" id="NF009047">
    <property type="entry name" value="PRK12381.1"/>
    <property type="match status" value="1"/>
</dbReference>
<dbReference type="PANTHER" id="PTHR11986">
    <property type="entry name" value="AMINOTRANSFERASE CLASS III"/>
    <property type="match status" value="1"/>
</dbReference>
<dbReference type="PANTHER" id="PTHR11986:SF113">
    <property type="entry name" value="SUCCINYLORNITHINE TRANSAMINASE"/>
    <property type="match status" value="1"/>
</dbReference>
<dbReference type="Pfam" id="PF00202">
    <property type="entry name" value="Aminotran_3"/>
    <property type="match status" value="1"/>
</dbReference>
<dbReference type="PIRSF" id="PIRSF000521">
    <property type="entry name" value="Transaminase_4ab_Lys_Orn"/>
    <property type="match status" value="1"/>
</dbReference>
<dbReference type="SUPFAM" id="SSF53383">
    <property type="entry name" value="PLP-dependent transferases"/>
    <property type="match status" value="1"/>
</dbReference>
<dbReference type="PROSITE" id="PS00600">
    <property type="entry name" value="AA_TRANSFER_CLASS_3"/>
    <property type="match status" value="1"/>
</dbReference>
<feature type="chain" id="PRO_0000112768" description="Succinylornithine transaminase/acetylornithine aminotransferase">
    <location>
        <begin position="1"/>
        <end position="406"/>
    </location>
</feature>
<feature type="binding site" evidence="1">
    <location>
        <begin position="108"/>
        <end position="109"/>
    </location>
    <ligand>
        <name>pyridoxal 5'-phosphate</name>
        <dbReference type="ChEBI" id="CHEBI:597326"/>
    </ligand>
</feature>
<feature type="binding site" evidence="1">
    <location>
        <position position="141"/>
    </location>
    <ligand>
        <name>pyridoxal 5'-phosphate</name>
        <dbReference type="ChEBI" id="CHEBI:597326"/>
    </ligand>
</feature>
<feature type="binding site" evidence="1">
    <location>
        <position position="144"/>
    </location>
    <ligand>
        <name>N(2)-acetyl-L-ornithine</name>
        <dbReference type="ChEBI" id="CHEBI:57805"/>
    </ligand>
</feature>
<feature type="binding site" evidence="1">
    <location>
        <begin position="226"/>
        <end position="229"/>
    </location>
    <ligand>
        <name>pyridoxal 5'-phosphate</name>
        <dbReference type="ChEBI" id="CHEBI:597326"/>
    </ligand>
</feature>
<feature type="binding site" evidence="1">
    <location>
        <position position="283"/>
    </location>
    <ligand>
        <name>N(2)-acetyl-L-ornithine</name>
        <dbReference type="ChEBI" id="CHEBI:57805"/>
    </ligand>
</feature>
<feature type="binding site" evidence="1">
    <location>
        <position position="284"/>
    </location>
    <ligand>
        <name>pyridoxal 5'-phosphate</name>
        <dbReference type="ChEBI" id="CHEBI:597326"/>
    </ligand>
</feature>
<feature type="modified residue" description="N6-(pyridoxal phosphate)lysine" evidence="1">
    <location>
        <position position="255"/>
    </location>
</feature>
<sequence length="406" mass="43748">MSAPHAQVERADFDRYMVPNYAPAAFIPVRGEGSRVWDQSGRELIDFAGGIAVTSLGHAHPALVKALTEQAQRIWHVSNVFTNEPALRLARKLVDATFAERVFLANSGAEANEAAFKLARRYANDVYGPQKYEIIAASNSFHGRTLFTVNVGGQPKYSDGFGPKFEGITHVPYNDLEALKAAISDKTCAVVLEPIQGEGGVLPAQQAYLEGARKLCDEHNALLVFDEVQSGMGRVGELFAYMHYGVVPDILSSAKSLGGGFPIGAMLTTGEIAKHLSVGTHGTTYGGNPLASAVAEAALDVINTPEVLDGVKAKHERFKSRLQKIGQEYGIFDEIRGMGLLIGAALTDEWKGKARDVLNAAEKEAVMVLQASPDVVRFAPSLVIDDAEIDEGLERFERAVAKLVRG</sequence>
<proteinExistence type="evidence at protein level"/>
<reference key="1">
    <citation type="journal article" date="1997" name="J. Bacteriol.">
        <title>Cloning and characterization of the aru genes encoding enzymes of the catabolic arginine succinyltransferase pathway in Pseudomonas aeruginosa.</title>
        <authorList>
            <person name="Itoh Y."/>
        </authorList>
    </citation>
    <scope>NUCLEOTIDE SEQUENCE [GENOMIC DNA]</scope>
    <scope>CATALYTIC ACTIVITY</scope>
    <scope>INDUCTION</scope>
    <scope>BIOPHYSICOCHEMICAL PROPERTIES</scope>
    <source>
        <strain>ATCC 15692 / DSM 22644 / CIP 104116 / JCM 14847 / LMG 12228 / 1C / PRS 101 / PAO1</strain>
    </source>
</reference>
<reference key="2">
    <citation type="journal article" date="2000" name="Nature">
        <title>Complete genome sequence of Pseudomonas aeruginosa PAO1, an opportunistic pathogen.</title>
        <authorList>
            <person name="Stover C.K."/>
            <person name="Pham X.-Q.T."/>
            <person name="Erwin A.L."/>
            <person name="Mizoguchi S.D."/>
            <person name="Warrener P."/>
            <person name="Hickey M.J."/>
            <person name="Brinkman F.S.L."/>
            <person name="Hufnagle W.O."/>
            <person name="Kowalik D.J."/>
            <person name="Lagrou M."/>
            <person name="Garber R.L."/>
            <person name="Goltry L."/>
            <person name="Tolentino E."/>
            <person name="Westbrock-Wadman S."/>
            <person name="Yuan Y."/>
            <person name="Brody L.L."/>
            <person name="Coulter S.N."/>
            <person name="Folger K.R."/>
            <person name="Kas A."/>
            <person name="Larbig K."/>
            <person name="Lim R.M."/>
            <person name="Smith K.A."/>
            <person name="Spencer D.H."/>
            <person name="Wong G.K.-S."/>
            <person name="Wu Z."/>
            <person name="Paulsen I.T."/>
            <person name="Reizer J."/>
            <person name="Saier M.H. Jr."/>
            <person name="Hancock R.E.W."/>
            <person name="Lory S."/>
            <person name="Olson M.V."/>
        </authorList>
    </citation>
    <scope>NUCLEOTIDE SEQUENCE [LARGE SCALE GENOMIC DNA]</scope>
    <source>
        <strain>ATCC 15692 / DSM 22644 / CIP 104116 / JCM 14847 / LMG 12228 / 1C / PRS 101 / PAO1</strain>
    </source>
</reference>
<reference key="3">
    <citation type="journal article" date="1997" name="J. Bacteriol.">
        <title>Cloning and characterization of argR, a gene that participates in regulation of arginine biosynthesis and catabolism in Pseudomonas aeruginosa PAO1.</title>
        <authorList>
            <person name="Park S.-M."/>
            <person name="Lu C.-D."/>
            <person name="Abdelal A.T."/>
        </authorList>
    </citation>
    <scope>NUCLEOTIDE SEQUENCE [GENOMIC DNA] OF 1-25</scope>
    <source>
        <strain>ATCC 15692 / DSM 22644 / CIP 104116 / JCM 14847 / LMG 12228 / 1C / PRS 101 / PAO1</strain>
    </source>
</reference>
<organism>
    <name type="scientific">Pseudomonas aeruginosa (strain ATCC 15692 / DSM 22644 / CIP 104116 / JCM 14847 / LMG 12228 / 1C / PRS 101 / PAO1)</name>
    <dbReference type="NCBI Taxonomy" id="208964"/>
    <lineage>
        <taxon>Bacteria</taxon>
        <taxon>Pseudomonadati</taxon>
        <taxon>Pseudomonadota</taxon>
        <taxon>Gammaproteobacteria</taxon>
        <taxon>Pseudomonadales</taxon>
        <taxon>Pseudomonadaceae</taxon>
        <taxon>Pseudomonas</taxon>
    </lineage>
</organism>
<comment type="function">
    <text>Transaminates both N(2)-acetylornithine and N(2)-succinylornithine.</text>
</comment>
<comment type="catalytic activity">
    <reaction evidence="2">
        <text>N(2)-succinyl-L-ornithine + 2-oxoglutarate = N-succinyl-L-glutamate 5-semialdehyde + L-glutamate</text>
        <dbReference type="Rhea" id="RHEA:16953"/>
        <dbReference type="ChEBI" id="CHEBI:16810"/>
        <dbReference type="ChEBI" id="CHEBI:29985"/>
        <dbReference type="ChEBI" id="CHEBI:58514"/>
        <dbReference type="ChEBI" id="CHEBI:58520"/>
        <dbReference type="EC" id="2.6.1.81"/>
    </reaction>
</comment>
<comment type="catalytic activity">
    <reaction evidence="2">
        <text>N(2)-acetyl-L-ornithine + 2-oxoglutarate = N-acetyl-L-glutamate 5-semialdehyde + L-glutamate</text>
        <dbReference type="Rhea" id="RHEA:18049"/>
        <dbReference type="ChEBI" id="CHEBI:16810"/>
        <dbReference type="ChEBI" id="CHEBI:29123"/>
        <dbReference type="ChEBI" id="CHEBI:29985"/>
        <dbReference type="ChEBI" id="CHEBI:57805"/>
        <dbReference type="EC" id="2.6.1.11"/>
    </reaction>
</comment>
<comment type="cofactor">
    <cofactor evidence="1">
        <name>pyridoxal 5'-phosphate</name>
        <dbReference type="ChEBI" id="CHEBI:597326"/>
    </cofactor>
    <text evidence="1">Binds 1 pyridoxal phosphate per subunit.</text>
</comment>
<comment type="biophysicochemical properties">
    <kinetics>
        <KM evidence="2">1.4 mM for N(2)-succinyl-L-ornithine (at 15 mM 2-ketoglutarate and pH 9.0)</KM>
        <KM evidence="2">1.1 mM for N(2)-acetyl-L-ornithine (at pH 9.0)</KM>
    </kinetics>
</comment>
<comment type="pathway">
    <text>Amino-acid biosynthesis; L-arginine biosynthesis; N(2)-acetyl-L-ornithine from L-glutamate: step 4/4.</text>
</comment>
<comment type="pathway">
    <text>Amino-acid degradation; L-arginine degradation via AST pathway; L-glutamate and succinate from L-arginine: step 3/5.</text>
</comment>
<comment type="subunit">
    <text evidence="1">Homodimer.</text>
</comment>
<comment type="subcellular location">
    <subcellularLocation>
        <location evidence="3">Cytoplasm</location>
    </subcellularLocation>
</comment>
<comment type="induction">
    <text evidence="2">Induced by arginine and repressed by succinate.</text>
</comment>
<comment type="similarity">
    <text evidence="3">Belongs to the class-III pyridoxal-phosphate-dependent aminotransferase family. ArgD subfamily.</text>
</comment>
<name>ARUC_PSEAE</name>
<protein>
    <recommendedName>
        <fullName>Succinylornithine transaminase/acetylornithine aminotransferase</fullName>
        <shortName>ACOAT</shortName>
        <shortName>SOAT</shortName>
        <shortName>Succinylornithine aminotransferase</shortName>
        <ecNumber>2.6.1.11</ecNumber>
        <ecNumber>2.6.1.81</ecNumber>
    </recommendedName>
</protein>
<gene>
    <name type="primary">aruC</name>
    <name type="synonym">argD</name>
    <name type="synonym">astC</name>
    <name type="ordered locus">PA0895</name>
</gene>
<accession>O30508</accession>